<reference key="1">
    <citation type="submission" date="2007-05" db="EMBL/GenBank/DDBJ databases">
        <title>Complete sequence of Thermosipho melanesiensis BI429.</title>
        <authorList>
            <consortium name="US DOE Joint Genome Institute"/>
            <person name="Copeland A."/>
            <person name="Lucas S."/>
            <person name="Lapidus A."/>
            <person name="Barry K."/>
            <person name="Glavina del Rio T."/>
            <person name="Dalin E."/>
            <person name="Tice H."/>
            <person name="Pitluck S."/>
            <person name="Chertkov O."/>
            <person name="Brettin T."/>
            <person name="Bruce D."/>
            <person name="Detter J.C."/>
            <person name="Han C."/>
            <person name="Schmutz J."/>
            <person name="Larimer F."/>
            <person name="Land M."/>
            <person name="Hauser L."/>
            <person name="Kyrpides N."/>
            <person name="Mikhailova N."/>
            <person name="Nelson K."/>
            <person name="Gogarten J.P."/>
            <person name="Noll K."/>
            <person name="Richardson P."/>
        </authorList>
    </citation>
    <scope>NUCLEOTIDE SEQUENCE [LARGE SCALE GENOMIC DNA]</scope>
    <source>
        <strain>DSM 12029 / CIP 104789 / BI429</strain>
    </source>
</reference>
<sequence length="157" mass="17719">MKIIGIDPGYGILGYGVLEKSGNKISHITHGVITTDKELSMYKRLQVIYEEFLRLLKEYSPDACAIESLFFYKNVKTAIRVGEARGVILLATSQMDLPLYEFTPYQVKNNITGYGHSDKKQVQKMVKMLLNLDKIPRPDDAADALAVAWCLAVETRF</sequence>
<comment type="function">
    <text evidence="1">The RuvA-RuvB-RuvC complex processes Holliday junction (HJ) DNA during genetic recombination and DNA repair. Endonuclease that resolves HJ intermediates. Cleaves cruciform DNA by making single-stranded nicks across the HJ at symmetrical positions within the homologous arms, yielding a 5'-phosphate and a 3'-hydroxyl group; requires a central core of homology in the junction. The consensus cleavage sequence is 5'-(A/T)TT(C/G)-3'. Cleavage occurs on the 3'-side of the TT dinucleotide at the point of strand exchange. HJ branch migration catalyzed by RuvA-RuvB allows RuvC to scan DNA until it finds its consensus sequence, where it cleaves and resolves the cruciform DNA.</text>
</comment>
<comment type="catalytic activity">
    <reaction evidence="1">
        <text>Endonucleolytic cleavage at a junction such as a reciprocal single-stranded crossover between two homologous DNA duplexes (Holliday junction).</text>
        <dbReference type="EC" id="3.1.21.10"/>
    </reaction>
</comment>
<comment type="cofactor">
    <cofactor evidence="1">
        <name>Mg(2+)</name>
        <dbReference type="ChEBI" id="CHEBI:18420"/>
    </cofactor>
    <text evidence="1">Binds 2 Mg(2+) ion per subunit.</text>
</comment>
<comment type="subunit">
    <text evidence="1">Homodimer which binds Holliday junction (HJ) DNA. The HJ becomes 2-fold symmetrical on binding to RuvC with unstacked arms; it has a different conformation from HJ DNA in complex with RuvA. In the full resolvosome a probable DNA-RuvA(4)-RuvB(12)-RuvC(2) complex forms which resolves the HJ.</text>
</comment>
<comment type="subcellular location">
    <subcellularLocation>
        <location evidence="1">Cytoplasm</location>
    </subcellularLocation>
</comment>
<comment type="similarity">
    <text evidence="1">Belongs to the RuvC family.</text>
</comment>
<feature type="chain" id="PRO_1000002848" description="Crossover junction endodeoxyribonuclease RuvC">
    <location>
        <begin position="1"/>
        <end position="157"/>
    </location>
</feature>
<feature type="active site" evidence="1">
    <location>
        <position position="7"/>
    </location>
</feature>
<feature type="active site" evidence="1">
    <location>
        <position position="67"/>
    </location>
</feature>
<feature type="active site" evidence="1">
    <location>
        <position position="140"/>
    </location>
</feature>
<feature type="binding site" evidence="1">
    <location>
        <position position="7"/>
    </location>
    <ligand>
        <name>Mg(2+)</name>
        <dbReference type="ChEBI" id="CHEBI:18420"/>
        <label>1</label>
    </ligand>
</feature>
<feature type="binding site" evidence="1">
    <location>
        <position position="67"/>
    </location>
    <ligand>
        <name>Mg(2+)</name>
        <dbReference type="ChEBI" id="CHEBI:18420"/>
        <label>2</label>
    </ligand>
</feature>
<feature type="binding site" evidence="1">
    <location>
        <position position="140"/>
    </location>
    <ligand>
        <name>Mg(2+)</name>
        <dbReference type="ChEBI" id="CHEBI:18420"/>
        <label>1</label>
    </ligand>
</feature>
<proteinExistence type="inferred from homology"/>
<name>RUVC_THEM4</name>
<evidence type="ECO:0000255" key="1">
    <source>
        <dbReference type="HAMAP-Rule" id="MF_00034"/>
    </source>
</evidence>
<dbReference type="EC" id="3.1.21.10" evidence="1"/>
<dbReference type="EMBL" id="CP000716">
    <property type="protein sequence ID" value="ABR30899.1"/>
    <property type="molecule type" value="Genomic_DNA"/>
</dbReference>
<dbReference type="RefSeq" id="WP_012057259.1">
    <property type="nucleotide sequence ID" value="NC_009616.1"/>
</dbReference>
<dbReference type="SMR" id="A6LLU8"/>
<dbReference type="STRING" id="391009.Tmel_1038"/>
<dbReference type="KEGG" id="tme:Tmel_1038"/>
<dbReference type="eggNOG" id="COG0817">
    <property type="taxonomic scope" value="Bacteria"/>
</dbReference>
<dbReference type="HOGENOM" id="CLU_091257_3_1_0"/>
<dbReference type="OrthoDB" id="9805499at2"/>
<dbReference type="Proteomes" id="UP000001110">
    <property type="component" value="Chromosome"/>
</dbReference>
<dbReference type="GO" id="GO:0005737">
    <property type="term" value="C:cytoplasm"/>
    <property type="evidence" value="ECO:0007669"/>
    <property type="project" value="UniProtKB-SubCell"/>
</dbReference>
<dbReference type="GO" id="GO:0048476">
    <property type="term" value="C:Holliday junction resolvase complex"/>
    <property type="evidence" value="ECO:0007669"/>
    <property type="project" value="UniProtKB-UniRule"/>
</dbReference>
<dbReference type="GO" id="GO:0008821">
    <property type="term" value="F:crossover junction DNA endonuclease activity"/>
    <property type="evidence" value="ECO:0007669"/>
    <property type="project" value="UniProtKB-UniRule"/>
</dbReference>
<dbReference type="GO" id="GO:0003677">
    <property type="term" value="F:DNA binding"/>
    <property type="evidence" value="ECO:0007669"/>
    <property type="project" value="UniProtKB-KW"/>
</dbReference>
<dbReference type="GO" id="GO:0000287">
    <property type="term" value="F:magnesium ion binding"/>
    <property type="evidence" value="ECO:0007669"/>
    <property type="project" value="UniProtKB-UniRule"/>
</dbReference>
<dbReference type="GO" id="GO:0006310">
    <property type="term" value="P:DNA recombination"/>
    <property type="evidence" value="ECO:0007669"/>
    <property type="project" value="UniProtKB-UniRule"/>
</dbReference>
<dbReference type="GO" id="GO:0006281">
    <property type="term" value="P:DNA repair"/>
    <property type="evidence" value="ECO:0007669"/>
    <property type="project" value="UniProtKB-UniRule"/>
</dbReference>
<dbReference type="CDD" id="cd16962">
    <property type="entry name" value="RuvC"/>
    <property type="match status" value="1"/>
</dbReference>
<dbReference type="FunFam" id="3.30.420.10:FF:000002">
    <property type="entry name" value="Crossover junction endodeoxyribonuclease RuvC"/>
    <property type="match status" value="1"/>
</dbReference>
<dbReference type="Gene3D" id="3.30.420.10">
    <property type="entry name" value="Ribonuclease H-like superfamily/Ribonuclease H"/>
    <property type="match status" value="1"/>
</dbReference>
<dbReference type="HAMAP" id="MF_00034">
    <property type="entry name" value="RuvC"/>
    <property type="match status" value="1"/>
</dbReference>
<dbReference type="InterPro" id="IPR012337">
    <property type="entry name" value="RNaseH-like_sf"/>
</dbReference>
<dbReference type="InterPro" id="IPR036397">
    <property type="entry name" value="RNaseH_sf"/>
</dbReference>
<dbReference type="InterPro" id="IPR002176">
    <property type="entry name" value="X-over_junc_endoDNase_RuvC"/>
</dbReference>
<dbReference type="NCBIfam" id="NF000711">
    <property type="entry name" value="PRK00039.2-1"/>
    <property type="match status" value="1"/>
</dbReference>
<dbReference type="NCBIfam" id="TIGR00228">
    <property type="entry name" value="ruvC"/>
    <property type="match status" value="1"/>
</dbReference>
<dbReference type="PANTHER" id="PTHR30194">
    <property type="entry name" value="CROSSOVER JUNCTION ENDODEOXYRIBONUCLEASE RUVC"/>
    <property type="match status" value="1"/>
</dbReference>
<dbReference type="PANTHER" id="PTHR30194:SF3">
    <property type="entry name" value="CROSSOVER JUNCTION ENDODEOXYRIBONUCLEASE RUVC"/>
    <property type="match status" value="1"/>
</dbReference>
<dbReference type="Pfam" id="PF02075">
    <property type="entry name" value="RuvC"/>
    <property type="match status" value="1"/>
</dbReference>
<dbReference type="PRINTS" id="PR00696">
    <property type="entry name" value="RSOLVASERUVC"/>
</dbReference>
<dbReference type="SUPFAM" id="SSF53098">
    <property type="entry name" value="Ribonuclease H-like"/>
    <property type="match status" value="1"/>
</dbReference>
<organism>
    <name type="scientific">Thermosipho melanesiensis (strain DSM 12029 / CIP 104789 / BI429)</name>
    <dbReference type="NCBI Taxonomy" id="391009"/>
    <lineage>
        <taxon>Bacteria</taxon>
        <taxon>Thermotogati</taxon>
        <taxon>Thermotogota</taxon>
        <taxon>Thermotogae</taxon>
        <taxon>Thermotogales</taxon>
        <taxon>Fervidobacteriaceae</taxon>
        <taxon>Thermosipho</taxon>
    </lineage>
</organism>
<accession>A6LLU8</accession>
<gene>
    <name evidence="1" type="primary">ruvC</name>
    <name type="ordered locus">Tmel_1038</name>
</gene>
<keyword id="KW-0963">Cytoplasm</keyword>
<keyword id="KW-0227">DNA damage</keyword>
<keyword id="KW-0233">DNA recombination</keyword>
<keyword id="KW-0234">DNA repair</keyword>
<keyword id="KW-0238">DNA-binding</keyword>
<keyword id="KW-0255">Endonuclease</keyword>
<keyword id="KW-0378">Hydrolase</keyword>
<keyword id="KW-0460">Magnesium</keyword>
<keyword id="KW-0479">Metal-binding</keyword>
<keyword id="KW-0540">Nuclease</keyword>
<protein>
    <recommendedName>
        <fullName evidence="1">Crossover junction endodeoxyribonuclease RuvC</fullName>
        <ecNumber evidence="1">3.1.21.10</ecNumber>
    </recommendedName>
    <alternativeName>
        <fullName evidence="1">Holliday junction nuclease RuvC</fullName>
    </alternativeName>
    <alternativeName>
        <fullName evidence="1">Holliday junction resolvase RuvC</fullName>
    </alternativeName>
</protein>